<comment type="function">
    <text evidence="1">Redox regulated molecular chaperone. Protects both thermally unfolding and oxidatively damaged proteins from irreversible aggregation. Plays an important role in the bacterial defense system toward oxidative stress.</text>
</comment>
<comment type="subcellular location">
    <subcellularLocation>
        <location evidence="1">Cytoplasm</location>
    </subcellularLocation>
</comment>
<comment type="PTM">
    <text evidence="1">Under oxidizing conditions two disulfide bonds are formed involving the reactive cysteines. Under reducing conditions zinc is bound to the reactive cysteines and the protein is inactive.</text>
</comment>
<comment type="similarity">
    <text evidence="1">Belongs to the HSP33 family.</text>
</comment>
<sequence length="293" mass="31544">MEDYLVKSVAENGQFRAYAVNATALVEEAHQIHDTWSAASAALGRAMVGTLLLATSGLQGEAGMTVKIQGDGPVGFIVVDGTAQGTVKAYMQNPHVHLPLNAKGKIDVAGAVGKTGTLSVTKMAPGDKTPYTGEVNLVSGELGDDFTYYLAQSEQIPSAVGLSVFVQSDDHIEVAGGFLIQVLPGASDEAINHLETTLRELPLVSDLLREGKTPEQILETIFAGRDLKILEKMPVEYKCDCSKDRFEKALASLSKDDLQEMIDNDHGAEAVCRFCGHKYHFSEEELKYLVATK</sequence>
<keyword id="KW-0143">Chaperone</keyword>
<keyword id="KW-0963">Cytoplasm</keyword>
<keyword id="KW-1015">Disulfide bond</keyword>
<keyword id="KW-0676">Redox-active center</keyword>
<keyword id="KW-1185">Reference proteome</keyword>
<keyword id="KW-0346">Stress response</keyword>
<keyword id="KW-0862">Zinc</keyword>
<name>HSLO_LIMF3</name>
<organism>
    <name type="scientific">Limosilactobacillus fermentum (strain NBRC 3956 / LMG 18251)</name>
    <name type="common">Lactobacillus fermentum</name>
    <dbReference type="NCBI Taxonomy" id="334390"/>
    <lineage>
        <taxon>Bacteria</taxon>
        <taxon>Bacillati</taxon>
        <taxon>Bacillota</taxon>
        <taxon>Bacilli</taxon>
        <taxon>Lactobacillales</taxon>
        <taxon>Lactobacillaceae</taxon>
        <taxon>Limosilactobacillus</taxon>
    </lineage>
</organism>
<proteinExistence type="inferred from homology"/>
<dbReference type="EMBL" id="AP008937">
    <property type="protein sequence ID" value="BAG26558.1"/>
    <property type="molecule type" value="Genomic_DNA"/>
</dbReference>
<dbReference type="RefSeq" id="WP_012390806.1">
    <property type="nucleotide sequence ID" value="NC_010610.1"/>
</dbReference>
<dbReference type="SMR" id="B2GA76"/>
<dbReference type="KEGG" id="lfe:LAF_0222"/>
<dbReference type="eggNOG" id="COG1281">
    <property type="taxonomic scope" value="Bacteria"/>
</dbReference>
<dbReference type="HOGENOM" id="CLU_054493_1_0_9"/>
<dbReference type="Proteomes" id="UP000001697">
    <property type="component" value="Chromosome"/>
</dbReference>
<dbReference type="GO" id="GO:0005737">
    <property type="term" value="C:cytoplasm"/>
    <property type="evidence" value="ECO:0007669"/>
    <property type="project" value="UniProtKB-SubCell"/>
</dbReference>
<dbReference type="GO" id="GO:0044183">
    <property type="term" value="F:protein folding chaperone"/>
    <property type="evidence" value="ECO:0007669"/>
    <property type="project" value="TreeGrafter"/>
</dbReference>
<dbReference type="GO" id="GO:0051082">
    <property type="term" value="F:unfolded protein binding"/>
    <property type="evidence" value="ECO:0007669"/>
    <property type="project" value="UniProtKB-UniRule"/>
</dbReference>
<dbReference type="GO" id="GO:0042026">
    <property type="term" value="P:protein refolding"/>
    <property type="evidence" value="ECO:0007669"/>
    <property type="project" value="TreeGrafter"/>
</dbReference>
<dbReference type="CDD" id="cd00498">
    <property type="entry name" value="Hsp33"/>
    <property type="match status" value="1"/>
</dbReference>
<dbReference type="Gene3D" id="3.55.30.10">
    <property type="entry name" value="Hsp33 domain"/>
    <property type="match status" value="1"/>
</dbReference>
<dbReference type="Gene3D" id="3.90.1280.10">
    <property type="entry name" value="HSP33 redox switch-like"/>
    <property type="match status" value="1"/>
</dbReference>
<dbReference type="HAMAP" id="MF_00117">
    <property type="entry name" value="HslO"/>
    <property type="match status" value="1"/>
</dbReference>
<dbReference type="InterPro" id="IPR000397">
    <property type="entry name" value="Heat_shock_Hsp33"/>
</dbReference>
<dbReference type="InterPro" id="IPR016154">
    <property type="entry name" value="Heat_shock_Hsp33_C"/>
</dbReference>
<dbReference type="InterPro" id="IPR016153">
    <property type="entry name" value="Heat_shock_Hsp33_N"/>
</dbReference>
<dbReference type="NCBIfam" id="NF001033">
    <property type="entry name" value="PRK00114.1"/>
    <property type="match status" value="1"/>
</dbReference>
<dbReference type="PANTHER" id="PTHR30111">
    <property type="entry name" value="33 KDA CHAPERONIN"/>
    <property type="match status" value="1"/>
</dbReference>
<dbReference type="PANTHER" id="PTHR30111:SF1">
    <property type="entry name" value="33 KDA CHAPERONIN"/>
    <property type="match status" value="1"/>
</dbReference>
<dbReference type="Pfam" id="PF01430">
    <property type="entry name" value="HSP33"/>
    <property type="match status" value="1"/>
</dbReference>
<dbReference type="PIRSF" id="PIRSF005261">
    <property type="entry name" value="Heat_shock_Hsp33"/>
    <property type="match status" value="1"/>
</dbReference>
<dbReference type="SUPFAM" id="SSF64397">
    <property type="entry name" value="Hsp33 domain"/>
    <property type="match status" value="1"/>
</dbReference>
<dbReference type="SUPFAM" id="SSF118352">
    <property type="entry name" value="HSP33 redox switch-like"/>
    <property type="match status" value="1"/>
</dbReference>
<reference key="1">
    <citation type="journal article" date="2008" name="DNA Res.">
        <title>Comparative genome analysis of Lactobacillus reuteri and Lactobacillus fermentum reveal a genomic island for reuterin and cobalamin production.</title>
        <authorList>
            <person name="Morita H."/>
            <person name="Toh H."/>
            <person name="Fukuda S."/>
            <person name="Horikawa H."/>
            <person name="Oshima K."/>
            <person name="Suzuki T."/>
            <person name="Murakami M."/>
            <person name="Hisamatsu S."/>
            <person name="Kato Y."/>
            <person name="Takizawa T."/>
            <person name="Fukuoka H."/>
            <person name="Yoshimura T."/>
            <person name="Itoh K."/>
            <person name="O'Sullivan D.J."/>
            <person name="McKay L.L."/>
            <person name="Ohno H."/>
            <person name="Kikuchi J."/>
            <person name="Masaoka T."/>
            <person name="Hattori M."/>
        </authorList>
    </citation>
    <scope>NUCLEOTIDE SEQUENCE [LARGE SCALE GENOMIC DNA]</scope>
    <source>
        <strain>NBRC 3956 / LMG 18251</strain>
    </source>
</reference>
<feature type="chain" id="PRO_1000095022" description="33 kDa chaperonin">
    <location>
        <begin position="1"/>
        <end position="293"/>
    </location>
</feature>
<feature type="disulfide bond" description="Redox-active" evidence="1">
    <location>
        <begin position="239"/>
        <end position="241"/>
    </location>
</feature>
<feature type="disulfide bond" description="Redox-active" evidence="1">
    <location>
        <begin position="272"/>
        <end position="275"/>
    </location>
</feature>
<gene>
    <name evidence="1" type="primary">hslO</name>
    <name type="ordered locus">LAF_0222</name>
</gene>
<accession>B2GA76</accession>
<evidence type="ECO:0000255" key="1">
    <source>
        <dbReference type="HAMAP-Rule" id="MF_00117"/>
    </source>
</evidence>
<protein>
    <recommendedName>
        <fullName evidence="1">33 kDa chaperonin</fullName>
    </recommendedName>
    <alternativeName>
        <fullName evidence="1">Heat shock protein 33 homolog</fullName>
        <shortName evidence="1">HSP33</shortName>
    </alternativeName>
</protein>